<proteinExistence type="inferred from homology"/>
<protein>
    <recommendedName>
        <fullName evidence="1">2,3,4,5-tetrahydropyridine-2,6-dicarboxylate N-succinyltransferase</fullName>
        <ecNumber evidence="1">2.3.1.117</ecNumber>
    </recommendedName>
    <alternativeName>
        <fullName evidence="1">Tetrahydrodipicolinate N-succinyltransferase</fullName>
        <shortName evidence="1">THDP succinyltransferase</shortName>
        <shortName evidence="1">THP succinyltransferase</shortName>
        <shortName evidence="1">Tetrahydropicolinate succinylase</shortName>
    </alternativeName>
</protein>
<organism>
    <name type="scientific">Haemophilus influenzae (strain PittEE)</name>
    <dbReference type="NCBI Taxonomy" id="374930"/>
    <lineage>
        <taxon>Bacteria</taxon>
        <taxon>Pseudomonadati</taxon>
        <taxon>Pseudomonadota</taxon>
        <taxon>Gammaproteobacteria</taxon>
        <taxon>Pasteurellales</taxon>
        <taxon>Pasteurellaceae</taxon>
        <taxon>Haemophilus</taxon>
    </lineage>
</organism>
<accession>A5UCM7</accession>
<feature type="chain" id="PRO_1000047142" description="2,3,4,5-tetrahydropyridine-2,6-dicarboxylate N-succinyltransferase">
    <location>
        <begin position="1"/>
        <end position="275"/>
    </location>
</feature>
<feature type="binding site" evidence="1">
    <location>
        <position position="104"/>
    </location>
    <ligand>
        <name>substrate</name>
    </ligand>
</feature>
<feature type="binding site" evidence="1">
    <location>
        <position position="141"/>
    </location>
    <ligand>
        <name>substrate</name>
    </ligand>
</feature>
<reference key="1">
    <citation type="journal article" date="2007" name="Genome Biol.">
        <title>Characterization and modeling of the Haemophilus influenzae core and supragenomes based on the complete genomic sequences of Rd and 12 clinical nontypeable strains.</title>
        <authorList>
            <person name="Hogg J.S."/>
            <person name="Hu F.Z."/>
            <person name="Janto B."/>
            <person name="Boissy R."/>
            <person name="Hayes J."/>
            <person name="Keefe R."/>
            <person name="Post J.C."/>
            <person name="Ehrlich G.D."/>
        </authorList>
    </citation>
    <scope>NUCLEOTIDE SEQUENCE [LARGE SCALE GENOMIC DNA]</scope>
    <source>
        <strain>PittEE</strain>
    </source>
</reference>
<keyword id="KW-0012">Acyltransferase</keyword>
<keyword id="KW-0028">Amino-acid biosynthesis</keyword>
<keyword id="KW-0963">Cytoplasm</keyword>
<keyword id="KW-0220">Diaminopimelate biosynthesis</keyword>
<keyword id="KW-0457">Lysine biosynthesis</keyword>
<keyword id="KW-0677">Repeat</keyword>
<keyword id="KW-0808">Transferase</keyword>
<name>DAPD_HAEIE</name>
<comment type="catalytic activity">
    <reaction evidence="1">
        <text>(S)-2,3,4,5-tetrahydrodipicolinate + succinyl-CoA + H2O = (S)-2-succinylamino-6-oxoheptanedioate + CoA</text>
        <dbReference type="Rhea" id="RHEA:17325"/>
        <dbReference type="ChEBI" id="CHEBI:15377"/>
        <dbReference type="ChEBI" id="CHEBI:15685"/>
        <dbReference type="ChEBI" id="CHEBI:16845"/>
        <dbReference type="ChEBI" id="CHEBI:57287"/>
        <dbReference type="ChEBI" id="CHEBI:57292"/>
        <dbReference type="EC" id="2.3.1.117"/>
    </reaction>
</comment>
<comment type="pathway">
    <text evidence="1">Amino-acid biosynthesis; L-lysine biosynthesis via DAP pathway; LL-2,6-diaminopimelate from (S)-tetrahydrodipicolinate (succinylase route): step 1/3.</text>
</comment>
<comment type="subunit">
    <text evidence="1">Homotrimer.</text>
</comment>
<comment type="subcellular location">
    <subcellularLocation>
        <location evidence="1">Cytoplasm</location>
    </subcellularLocation>
</comment>
<comment type="similarity">
    <text evidence="1">Belongs to the transferase hexapeptide repeat family.</text>
</comment>
<sequence>MSNLQAIIEAAFEKRAEITPKTVDAETRAAIEEVIEGLDSGKYRVAEKIAGEWVTHQWLKKAVLLSFRINDNQIIDGAETKYYDKVALKFADYTEERFTEEGFRVVPSATVRKGAYISKNCVLMPSYVNIGAYVGEGTMVDTWATVGSCAQIGKNVHLSGGVGIGGVLEPLQANPTIIGDNCFIGARSEVVEGVIVEDGCVISMGVFIGQSTKIYDRETGEIHYGRVPAGSVVVSGSLPSKCGKYSLYCAVIVKKVDAKTLGKVGINELLRSIEE</sequence>
<gene>
    <name evidence="1" type="primary">dapD</name>
    <name type="ordered locus">CGSHiEE_05835</name>
</gene>
<evidence type="ECO:0000255" key="1">
    <source>
        <dbReference type="HAMAP-Rule" id="MF_00811"/>
    </source>
</evidence>
<dbReference type="EC" id="2.3.1.117" evidence="1"/>
<dbReference type="EMBL" id="CP000671">
    <property type="protein sequence ID" value="ABQ98528.1"/>
    <property type="molecule type" value="Genomic_DNA"/>
</dbReference>
<dbReference type="SMR" id="A5UCM7"/>
<dbReference type="KEGG" id="hip:CGSHiEE_05835"/>
<dbReference type="HOGENOM" id="CLU_050859_0_1_6"/>
<dbReference type="UniPathway" id="UPA00034">
    <property type="reaction ID" value="UER00019"/>
</dbReference>
<dbReference type="GO" id="GO:0005737">
    <property type="term" value="C:cytoplasm"/>
    <property type="evidence" value="ECO:0007669"/>
    <property type="project" value="UniProtKB-SubCell"/>
</dbReference>
<dbReference type="GO" id="GO:0008666">
    <property type="term" value="F:2,3,4,5-tetrahydropyridine-2,6-dicarboxylate N-succinyltransferase activity"/>
    <property type="evidence" value="ECO:0007669"/>
    <property type="project" value="UniProtKB-UniRule"/>
</dbReference>
<dbReference type="GO" id="GO:0016779">
    <property type="term" value="F:nucleotidyltransferase activity"/>
    <property type="evidence" value="ECO:0007669"/>
    <property type="project" value="TreeGrafter"/>
</dbReference>
<dbReference type="GO" id="GO:0019877">
    <property type="term" value="P:diaminopimelate biosynthetic process"/>
    <property type="evidence" value="ECO:0007669"/>
    <property type="project" value="UniProtKB-UniRule"/>
</dbReference>
<dbReference type="GO" id="GO:0009089">
    <property type="term" value="P:lysine biosynthetic process via diaminopimelate"/>
    <property type="evidence" value="ECO:0007669"/>
    <property type="project" value="UniProtKB-UniRule"/>
</dbReference>
<dbReference type="CDD" id="cd03350">
    <property type="entry name" value="LbH_THP_succinylT"/>
    <property type="match status" value="1"/>
</dbReference>
<dbReference type="Gene3D" id="2.160.10.10">
    <property type="entry name" value="Hexapeptide repeat proteins"/>
    <property type="match status" value="1"/>
</dbReference>
<dbReference type="Gene3D" id="1.10.166.10">
    <property type="entry name" value="Tetrahydrodipicolinate-N-succinyltransferase, N-terminal domain"/>
    <property type="match status" value="1"/>
</dbReference>
<dbReference type="HAMAP" id="MF_00811">
    <property type="entry name" value="DapD"/>
    <property type="match status" value="1"/>
</dbReference>
<dbReference type="InterPro" id="IPR005664">
    <property type="entry name" value="DapD_Trfase_Hexpep_rpt_fam"/>
</dbReference>
<dbReference type="InterPro" id="IPR001451">
    <property type="entry name" value="Hexapep"/>
</dbReference>
<dbReference type="InterPro" id="IPR018357">
    <property type="entry name" value="Hexapep_transf_CS"/>
</dbReference>
<dbReference type="InterPro" id="IPR023180">
    <property type="entry name" value="THP_succinylTrfase_dom1"/>
</dbReference>
<dbReference type="InterPro" id="IPR037133">
    <property type="entry name" value="THP_succinylTrfase_N_sf"/>
</dbReference>
<dbReference type="InterPro" id="IPR011004">
    <property type="entry name" value="Trimer_LpxA-like_sf"/>
</dbReference>
<dbReference type="NCBIfam" id="TIGR00965">
    <property type="entry name" value="dapD"/>
    <property type="match status" value="1"/>
</dbReference>
<dbReference type="NCBIfam" id="NF008808">
    <property type="entry name" value="PRK11830.1"/>
    <property type="match status" value="1"/>
</dbReference>
<dbReference type="PANTHER" id="PTHR19136:SF52">
    <property type="entry name" value="2,3,4,5-TETRAHYDROPYRIDINE-2,6-DICARBOXYLATE N-SUCCINYLTRANSFERASE"/>
    <property type="match status" value="1"/>
</dbReference>
<dbReference type="PANTHER" id="PTHR19136">
    <property type="entry name" value="MOLYBDENUM COFACTOR GUANYLYLTRANSFERASE"/>
    <property type="match status" value="1"/>
</dbReference>
<dbReference type="Pfam" id="PF14602">
    <property type="entry name" value="Hexapep_2"/>
    <property type="match status" value="1"/>
</dbReference>
<dbReference type="Pfam" id="PF14805">
    <property type="entry name" value="THDPS_N_2"/>
    <property type="match status" value="1"/>
</dbReference>
<dbReference type="SUPFAM" id="SSF51161">
    <property type="entry name" value="Trimeric LpxA-like enzymes"/>
    <property type="match status" value="1"/>
</dbReference>
<dbReference type="PROSITE" id="PS00101">
    <property type="entry name" value="HEXAPEP_TRANSFERASES"/>
    <property type="match status" value="1"/>
</dbReference>